<proteinExistence type="inferred from homology"/>
<evidence type="ECO:0000255" key="1">
    <source>
        <dbReference type="HAMAP-Rule" id="MF_00265"/>
    </source>
</evidence>
<feature type="chain" id="PRO_0000428594" description="Ribonuclease VapC39">
    <location>
        <begin position="1"/>
        <end position="139"/>
    </location>
</feature>
<feature type="domain" description="PINc" evidence="1">
    <location>
        <begin position="4"/>
        <end position="133"/>
    </location>
</feature>
<feature type="binding site" evidence="1">
    <location>
        <position position="6"/>
    </location>
    <ligand>
        <name>Mg(2+)</name>
        <dbReference type="ChEBI" id="CHEBI:18420"/>
    </ligand>
</feature>
<feature type="binding site" evidence="1">
    <location>
        <position position="106"/>
    </location>
    <ligand>
        <name>Mg(2+)</name>
        <dbReference type="ChEBI" id="CHEBI:18420"/>
    </ligand>
</feature>
<keyword id="KW-0378">Hydrolase</keyword>
<keyword id="KW-0460">Magnesium</keyword>
<keyword id="KW-0479">Metal-binding</keyword>
<keyword id="KW-0540">Nuclease</keyword>
<keyword id="KW-1185">Reference proteome</keyword>
<keyword id="KW-1277">Toxin-antitoxin system</keyword>
<dbReference type="EC" id="3.1.-.-" evidence="1"/>
<dbReference type="EMBL" id="AE000516">
    <property type="protein sequence ID" value="AAK46915.1"/>
    <property type="molecule type" value="Genomic_DNA"/>
</dbReference>
<dbReference type="PIR" id="F70657">
    <property type="entry name" value="F70657"/>
</dbReference>
<dbReference type="RefSeq" id="WP_003412970.1">
    <property type="nucleotide sequence ID" value="NZ_KK341227.1"/>
</dbReference>
<dbReference type="SMR" id="P9WF62"/>
<dbReference type="KEGG" id="mtc:MT2605"/>
<dbReference type="PATRIC" id="fig|83331.31.peg.2810"/>
<dbReference type="HOGENOM" id="CLU_145365_0_0_11"/>
<dbReference type="Proteomes" id="UP000001020">
    <property type="component" value="Chromosome"/>
</dbReference>
<dbReference type="GO" id="GO:0000287">
    <property type="term" value="F:magnesium ion binding"/>
    <property type="evidence" value="ECO:0007669"/>
    <property type="project" value="UniProtKB-UniRule"/>
</dbReference>
<dbReference type="GO" id="GO:0004540">
    <property type="term" value="F:RNA nuclease activity"/>
    <property type="evidence" value="ECO:0007669"/>
    <property type="project" value="InterPro"/>
</dbReference>
<dbReference type="GO" id="GO:0045926">
    <property type="term" value="P:negative regulation of growth"/>
    <property type="evidence" value="ECO:0007669"/>
    <property type="project" value="UniProtKB-ARBA"/>
</dbReference>
<dbReference type="CDD" id="cd18678">
    <property type="entry name" value="PIN_MtVapC25_VapC33-like"/>
    <property type="match status" value="1"/>
</dbReference>
<dbReference type="Gene3D" id="3.40.50.1010">
    <property type="entry name" value="5'-nuclease"/>
    <property type="match status" value="1"/>
</dbReference>
<dbReference type="HAMAP" id="MF_00265">
    <property type="entry name" value="VapC_Nob1"/>
    <property type="match status" value="1"/>
</dbReference>
<dbReference type="InterPro" id="IPR006226">
    <property type="entry name" value="Mtu_PIN"/>
</dbReference>
<dbReference type="InterPro" id="IPR029060">
    <property type="entry name" value="PIN-like_dom_sf"/>
</dbReference>
<dbReference type="InterPro" id="IPR002716">
    <property type="entry name" value="PIN_dom"/>
</dbReference>
<dbReference type="InterPro" id="IPR022907">
    <property type="entry name" value="VapC_family"/>
</dbReference>
<dbReference type="NCBIfam" id="TIGR00028">
    <property type="entry name" value="Mtu_PIN_fam"/>
    <property type="match status" value="1"/>
</dbReference>
<dbReference type="Pfam" id="PF01850">
    <property type="entry name" value="PIN"/>
    <property type="match status" value="1"/>
</dbReference>
<dbReference type="SUPFAM" id="SSF88723">
    <property type="entry name" value="PIN domain-like"/>
    <property type="match status" value="1"/>
</dbReference>
<gene>
    <name evidence="1" type="primary">vapC39</name>
    <name type="ordered locus">MT2605</name>
</gene>
<comment type="function">
    <text evidence="1">Toxic component of a type II toxin-antitoxin (TA) system. An RNase. Its toxic effect is neutralized by coexpression with cognate antitoxin VapB39 (By similarity).</text>
</comment>
<comment type="cofactor">
    <cofactor evidence="1">
        <name>Mg(2+)</name>
        <dbReference type="ChEBI" id="CHEBI:18420"/>
    </cofactor>
</comment>
<comment type="similarity">
    <text evidence="1">Belongs to the PINc/VapC protein family.</text>
</comment>
<organism>
    <name type="scientific">Mycobacterium tuberculosis (strain CDC 1551 / Oshkosh)</name>
    <dbReference type="NCBI Taxonomy" id="83331"/>
    <lineage>
        <taxon>Bacteria</taxon>
        <taxon>Bacillati</taxon>
        <taxon>Actinomycetota</taxon>
        <taxon>Actinomycetes</taxon>
        <taxon>Mycobacteriales</taxon>
        <taxon>Mycobacteriaceae</taxon>
        <taxon>Mycobacterium</taxon>
        <taxon>Mycobacterium tuberculosis complex</taxon>
    </lineage>
</organism>
<accession>P9WF62</accession>
<accession>L0TBH2</accession>
<accession>P95023</accession>
<accession>Q7D6Y8</accession>
<name>VPC39_MYCTO</name>
<sequence>MTALLDVNVLIALGWPNHVHHAAAQRWFTQFSSNGWATTPITEAGYVRISSNRSVMQVSTTPAIAIAQLAAMTSLAGHTFWPDDVPLIVGSAGDRDAVSNHRRVTDCHLIALAARYGGRLVTFDAALADSASAGLVEVL</sequence>
<reference key="1">
    <citation type="journal article" date="2002" name="J. Bacteriol.">
        <title>Whole-genome comparison of Mycobacterium tuberculosis clinical and laboratory strains.</title>
        <authorList>
            <person name="Fleischmann R.D."/>
            <person name="Alland D."/>
            <person name="Eisen J.A."/>
            <person name="Carpenter L."/>
            <person name="White O."/>
            <person name="Peterson J.D."/>
            <person name="DeBoy R.T."/>
            <person name="Dodson R.J."/>
            <person name="Gwinn M.L."/>
            <person name="Haft D.H."/>
            <person name="Hickey E.K."/>
            <person name="Kolonay J.F."/>
            <person name="Nelson W.C."/>
            <person name="Umayam L.A."/>
            <person name="Ermolaeva M.D."/>
            <person name="Salzberg S.L."/>
            <person name="Delcher A."/>
            <person name="Utterback T.R."/>
            <person name="Weidman J.F."/>
            <person name="Khouri H.M."/>
            <person name="Gill J."/>
            <person name="Mikula A."/>
            <person name="Bishai W."/>
            <person name="Jacobs W.R. Jr."/>
            <person name="Venter J.C."/>
            <person name="Fraser C.M."/>
        </authorList>
    </citation>
    <scope>NUCLEOTIDE SEQUENCE [LARGE SCALE GENOMIC DNA]</scope>
    <source>
        <strain>CDC 1551 / Oshkosh</strain>
    </source>
</reference>
<protein>
    <recommendedName>
        <fullName evidence="1">Ribonuclease VapC39</fullName>
        <shortName evidence="1">RNase VapC39</shortName>
        <ecNumber evidence="1">3.1.-.-</ecNumber>
    </recommendedName>
    <alternativeName>
        <fullName evidence="1">Toxin VapC39</fullName>
    </alternativeName>
</protein>